<dbReference type="EMBL" id="CR382137">
    <property type="protein sequence ID" value="CAG88253.2"/>
    <property type="molecule type" value="Genomic_DNA"/>
</dbReference>
<dbReference type="RefSeq" id="XP_460000.2">
    <property type="nucleotide sequence ID" value="XM_460000.1"/>
</dbReference>
<dbReference type="SMR" id="Q6BP70"/>
<dbReference type="FunCoup" id="Q6BP70">
    <property type="interactions" value="36"/>
</dbReference>
<dbReference type="GeneID" id="2902265"/>
<dbReference type="KEGG" id="dha:DEHA2E16038g"/>
<dbReference type="VEuPathDB" id="FungiDB:DEHA2E16038g"/>
<dbReference type="eggNOG" id="ENOG502RS18">
    <property type="taxonomic scope" value="Eukaryota"/>
</dbReference>
<dbReference type="HOGENOM" id="CLU_429039_0_0_1"/>
<dbReference type="InParanoid" id="Q6BP70"/>
<dbReference type="OMA" id="CKEPAND"/>
<dbReference type="OrthoDB" id="5349119at2759"/>
<dbReference type="Proteomes" id="UP000000599">
    <property type="component" value="Chromosome E"/>
</dbReference>
<dbReference type="GO" id="GO:0033557">
    <property type="term" value="C:Slx1-Slx4 complex"/>
    <property type="evidence" value="ECO:0007669"/>
    <property type="project" value="UniProtKB-UniRule"/>
</dbReference>
<dbReference type="GO" id="GO:0017108">
    <property type="term" value="F:5'-flap endonuclease activity"/>
    <property type="evidence" value="ECO:0007669"/>
    <property type="project" value="InterPro"/>
</dbReference>
<dbReference type="GO" id="GO:0006310">
    <property type="term" value="P:DNA recombination"/>
    <property type="evidence" value="ECO:0007669"/>
    <property type="project" value="UniProtKB-UniRule"/>
</dbReference>
<dbReference type="GO" id="GO:0006281">
    <property type="term" value="P:DNA repair"/>
    <property type="evidence" value="ECO:0007669"/>
    <property type="project" value="UniProtKB-UniRule"/>
</dbReference>
<dbReference type="GO" id="GO:0006260">
    <property type="term" value="P:DNA replication"/>
    <property type="evidence" value="ECO:0007669"/>
    <property type="project" value="InterPro"/>
</dbReference>
<dbReference type="HAMAP" id="MF_03110">
    <property type="entry name" value="Endonuc_su_Slx4"/>
    <property type="match status" value="1"/>
</dbReference>
<dbReference type="InterPro" id="IPR027784">
    <property type="entry name" value="Slx4_ascomycetes"/>
</dbReference>
<dbReference type="InterPro" id="IPR018574">
    <property type="entry name" value="Structure-sp_endonuc_su_Slx4"/>
</dbReference>
<dbReference type="Pfam" id="PF09494">
    <property type="entry name" value="Slx4"/>
    <property type="match status" value="1"/>
</dbReference>
<comment type="function">
    <text evidence="1">Regulatory subunit of the SLX1-SLX4 structure-specific endonuclease that resolves DNA secondary structures generated during DNA repair and recombination. Has endonuclease activity towards branched DNA substrates, introducing single-strand cuts in duplex DNA close to junctions with ss-DNA.</text>
</comment>
<comment type="subunit">
    <text evidence="1">Forms a heterodimer with SLX1.</text>
</comment>
<comment type="subcellular location">
    <subcellularLocation>
        <location evidence="1">Nucleus</location>
    </subcellularLocation>
</comment>
<comment type="PTM">
    <text evidence="1">Phosphorylated in response to DNA damage.</text>
</comment>
<comment type="similarity">
    <text evidence="1">Belongs to the SLX4 family.</text>
</comment>
<name>SLX4_DEBHA</name>
<accession>Q6BP70</accession>
<evidence type="ECO:0000255" key="1">
    <source>
        <dbReference type="HAMAP-Rule" id="MF_03110"/>
    </source>
</evidence>
<evidence type="ECO:0000256" key="2">
    <source>
        <dbReference type="SAM" id="MobiDB-lite"/>
    </source>
</evidence>
<sequence length="788" mass="90082">MSRLTEDSIGDINLASTQMQGRLEEFDEISKEEENMKKRIERLRKFKNIDTNTNHTIGLQNENLENKNKDTSITKPKRRSKRDNNRIKSLTSLMEETYNKGKSFQELKQSKLGQKDAQLSIFQYFSGHKEKIGDILKRIESIEKRKLESSDVPEIEHESRILYTKKEWTDIIKRIRLRFPELSSRTKKSLKYITNKIQIQNQSQLISEYPKNNSSIWSQASAPPDTEFTDDDLKWLYDLTSEQIINESTILQNDLEESDNETPFVMTLSQVMNTTKSEDTIDREFDVISDSSPEPSPIRVSFCCRDEQSDKALHLSEQKIQVKNSIYDPEFNGNEIFSHQKDSVETAVSIESFPFVQSGQRESITGDIAEISEDNFQVSETAPRQPQAIHGTQEAPIEISSSSINRGKTNLMSEEDRASHNEAEEVIISSPIKDSELFKTPTKRTPGSKNIMSSPFRLHCNSSPLSIRSNSVTPRHERIVSEESSAYSTARSKFKLSSAQPIPSQYQFDDSEEEAIFSSMPARQAYKKRKVYHTSRLLIDGGLYVELMNENSKVKIKTIETKRQPVDSENEIRDSEDEGEHDNSLSVIEITREVDDTDDLVNLGRNPRNENDTSVLQVPSSPQIDNSNVLGSLYTSQAADSAFGSEKILEDPIRSNALELTQDEFNNMSTKDLKAKFQEWGLKPVKGKEKMIQILSETNKLVSQSQLNDSQDKPMTASQHTIKTNIYNRISFHLKQDQYWLDKILSFEPINLCMLQEWLASGSAGVKLETDILEKYCDELGITYTDIK</sequence>
<keyword id="KW-0227">DNA damage</keyword>
<keyword id="KW-0233">DNA recombination</keyword>
<keyword id="KW-0234">DNA repair</keyword>
<keyword id="KW-0539">Nucleus</keyword>
<keyword id="KW-0597">Phosphoprotein</keyword>
<keyword id="KW-1185">Reference proteome</keyword>
<organism>
    <name type="scientific">Debaryomyces hansenii (strain ATCC 36239 / CBS 767 / BCRC 21394 / JCM 1990 / NBRC 0083 / IGC 2968)</name>
    <name type="common">Yeast</name>
    <name type="synonym">Torulaspora hansenii</name>
    <dbReference type="NCBI Taxonomy" id="284592"/>
    <lineage>
        <taxon>Eukaryota</taxon>
        <taxon>Fungi</taxon>
        <taxon>Dikarya</taxon>
        <taxon>Ascomycota</taxon>
        <taxon>Saccharomycotina</taxon>
        <taxon>Pichiomycetes</taxon>
        <taxon>Debaryomycetaceae</taxon>
        <taxon>Debaryomyces</taxon>
    </lineage>
</organism>
<reference key="1">
    <citation type="journal article" date="2004" name="Nature">
        <title>Genome evolution in yeasts.</title>
        <authorList>
            <person name="Dujon B."/>
            <person name="Sherman D."/>
            <person name="Fischer G."/>
            <person name="Durrens P."/>
            <person name="Casaregola S."/>
            <person name="Lafontaine I."/>
            <person name="de Montigny J."/>
            <person name="Marck C."/>
            <person name="Neuveglise C."/>
            <person name="Talla E."/>
            <person name="Goffard N."/>
            <person name="Frangeul L."/>
            <person name="Aigle M."/>
            <person name="Anthouard V."/>
            <person name="Babour A."/>
            <person name="Barbe V."/>
            <person name="Barnay S."/>
            <person name="Blanchin S."/>
            <person name="Beckerich J.-M."/>
            <person name="Beyne E."/>
            <person name="Bleykasten C."/>
            <person name="Boisrame A."/>
            <person name="Boyer J."/>
            <person name="Cattolico L."/>
            <person name="Confanioleri F."/>
            <person name="de Daruvar A."/>
            <person name="Despons L."/>
            <person name="Fabre E."/>
            <person name="Fairhead C."/>
            <person name="Ferry-Dumazet H."/>
            <person name="Groppi A."/>
            <person name="Hantraye F."/>
            <person name="Hennequin C."/>
            <person name="Jauniaux N."/>
            <person name="Joyet P."/>
            <person name="Kachouri R."/>
            <person name="Kerrest A."/>
            <person name="Koszul R."/>
            <person name="Lemaire M."/>
            <person name="Lesur I."/>
            <person name="Ma L."/>
            <person name="Muller H."/>
            <person name="Nicaud J.-M."/>
            <person name="Nikolski M."/>
            <person name="Oztas S."/>
            <person name="Ozier-Kalogeropoulos O."/>
            <person name="Pellenz S."/>
            <person name="Potier S."/>
            <person name="Richard G.-F."/>
            <person name="Straub M.-L."/>
            <person name="Suleau A."/>
            <person name="Swennen D."/>
            <person name="Tekaia F."/>
            <person name="Wesolowski-Louvel M."/>
            <person name="Westhof E."/>
            <person name="Wirth B."/>
            <person name="Zeniou-Meyer M."/>
            <person name="Zivanovic Y."/>
            <person name="Bolotin-Fukuhara M."/>
            <person name="Thierry A."/>
            <person name="Bouchier C."/>
            <person name="Caudron B."/>
            <person name="Scarpelli C."/>
            <person name="Gaillardin C."/>
            <person name="Weissenbach J."/>
            <person name="Wincker P."/>
            <person name="Souciet J.-L."/>
        </authorList>
    </citation>
    <scope>NUCLEOTIDE SEQUENCE [LARGE SCALE GENOMIC DNA]</scope>
    <source>
        <strain>ATCC 36239 / CBS 767 / BCRC 21394 / JCM 1990 / NBRC 0083 / IGC 2968</strain>
    </source>
</reference>
<protein>
    <recommendedName>
        <fullName evidence="1">Structure-specific endonuclease subunit SLX4</fullName>
    </recommendedName>
</protein>
<feature type="chain" id="PRO_0000388027" description="Structure-specific endonuclease subunit SLX4">
    <location>
        <begin position="1"/>
        <end position="788"/>
    </location>
</feature>
<feature type="region of interest" description="Disordered" evidence="2">
    <location>
        <begin position="59"/>
        <end position="86"/>
    </location>
</feature>
<feature type="region of interest" description="Disordered" evidence="2">
    <location>
        <begin position="562"/>
        <end position="584"/>
    </location>
</feature>
<feature type="region of interest" description="Disordered" evidence="2">
    <location>
        <begin position="599"/>
        <end position="622"/>
    </location>
</feature>
<feature type="compositionally biased region" description="Basic and acidic residues" evidence="2">
    <location>
        <begin position="562"/>
        <end position="573"/>
    </location>
</feature>
<feature type="compositionally biased region" description="Polar residues" evidence="2">
    <location>
        <begin position="612"/>
        <end position="622"/>
    </location>
</feature>
<gene>
    <name evidence="1" type="primary">SLX4</name>
    <name type="ordered locus">DEHA2E16038g</name>
</gene>
<proteinExistence type="inferred from homology"/>